<dbReference type="EC" id="1.3.7.7" evidence="1"/>
<dbReference type="EMBL" id="CP000250">
    <property type="protein sequence ID" value="ABD08674.1"/>
    <property type="molecule type" value="Genomic_DNA"/>
</dbReference>
<dbReference type="RefSeq" id="WP_011442858.1">
    <property type="nucleotide sequence ID" value="NC_007778.1"/>
</dbReference>
<dbReference type="SMR" id="Q2ISY6"/>
<dbReference type="STRING" id="316058.RPB_3981"/>
<dbReference type="KEGG" id="rpb:RPB_3981"/>
<dbReference type="eggNOG" id="COG2710">
    <property type="taxonomic scope" value="Bacteria"/>
</dbReference>
<dbReference type="HOGENOM" id="CLU_037170_0_0_5"/>
<dbReference type="OrthoDB" id="5714774at2"/>
<dbReference type="UniPathway" id="UPA00671"/>
<dbReference type="Proteomes" id="UP000008809">
    <property type="component" value="Chromosome"/>
</dbReference>
<dbReference type="GO" id="GO:0051539">
    <property type="term" value="F:4 iron, 4 sulfur cluster binding"/>
    <property type="evidence" value="ECO:0007669"/>
    <property type="project" value="UniProtKB-UniRule"/>
</dbReference>
<dbReference type="GO" id="GO:0005524">
    <property type="term" value="F:ATP binding"/>
    <property type="evidence" value="ECO:0007669"/>
    <property type="project" value="UniProtKB-UniRule"/>
</dbReference>
<dbReference type="GO" id="GO:0046872">
    <property type="term" value="F:metal ion binding"/>
    <property type="evidence" value="ECO:0007669"/>
    <property type="project" value="UniProtKB-KW"/>
</dbReference>
<dbReference type="GO" id="GO:0016730">
    <property type="term" value="F:oxidoreductase activity, acting on iron-sulfur proteins as donors"/>
    <property type="evidence" value="ECO:0007669"/>
    <property type="project" value="InterPro"/>
</dbReference>
<dbReference type="GO" id="GO:0016636">
    <property type="term" value="F:oxidoreductase activity, acting on the CH-CH group of donors, iron-sulfur protein as acceptor"/>
    <property type="evidence" value="ECO:0007669"/>
    <property type="project" value="UniProtKB-UniRule"/>
</dbReference>
<dbReference type="GO" id="GO:0036070">
    <property type="term" value="P:light-independent bacteriochlorophyll biosynthetic process"/>
    <property type="evidence" value="ECO:0007669"/>
    <property type="project" value="UniProtKB-UniRule"/>
</dbReference>
<dbReference type="GO" id="GO:0019685">
    <property type="term" value="P:photosynthesis, dark reaction"/>
    <property type="evidence" value="ECO:0007669"/>
    <property type="project" value="InterPro"/>
</dbReference>
<dbReference type="Gene3D" id="3.40.50.1980">
    <property type="entry name" value="Nitrogenase molybdenum iron protein domain"/>
    <property type="match status" value="3"/>
</dbReference>
<dbReference type="HAMAP" id="MF_00352">
    <property type="entry name" value="ChlN_BchN"/>
    <property type="match status" value="1"/>
</dbReference>
<dbReference type="InterPro" id="IPR050293">
    <property type="entry name" value="LIPOR_BchN/ChlN"/>
</dbReference>
<dbReference type="InterPro" id="IPR000510">
    <property type="entry name" value="Nase/OxRdtase_comp1"/>
</dbReference>
<dbReference type="InterPro" id="IPR005970">
    <property type="entry name" value="Protochl_reductN"/>
</dbReference>
<dbReference type="NCBIfam" id="TIGR01279">
    <property type="entry name" value="DPOR_bchN"/>
    <property type="match status" value="1"/>
</dbReference>
<dbReference type="NCBIfam" id="NF002768">
    <property type="entry name" value="PRK02842.1"/>
    <property type="match status" value="1"/>
</dbReference>
<dbReference type="PANTHER" id="PTHR39429">
    <property type="entry name" value="LIGHT-INDEPENDENT PROTOCHLOROPHYLLIDE REDUCTASE SUBUNIT N"/>
    <property type="match status" value="1"/>
</dbReference>
<dbReference type="PANTHER" id="PTHR39429:SF3">
    <property type="entry name" value="LIGHT-INDEPENDENT PROTOCHLOROPHYLLIDE REDUCTASE SUBUNIT N"/>
    <property type="match status" value="1"/>
</dbReference>
<dbReference type="Pfam" id="PF00148">
    <property type="entry name" value="Oxidored_nitro"/>
    <property type="match status" value="1"/>
</dbReference>
<dbReference type="PIRSF" id="PIRSF000162">
    <property type="entry name" value="P_chlorophyll_rd"/>
    <property type="match status" value="1"/>
</dbReference>
<dbReference type="SUPFAM" id="SSF53807">
    <property type="entry name" value="Helical backbone' metal receptor"/>
    <property type="match status" value="1"/>
</dbReference>
<reference key="1">
    <citation type="submission" date="2006-01" db="EMBL/GenBank/DDBJ databases">
        <title>Complete sequence of Rhodopseudomonas palustris HaA2.</title>
        <authorList>
            <consortium name="US DOE Joint Genome Institute"/>
            <person name="Copeland A."/>
            <person name="Lucas S."/>
            <person name="Lapidus A."/>
            <person name="Barry K."/>
            <person name="Detter J.C."/>
            <person name="Glavina T."/>
            <person name="Hammon N."/>
            <person name="Israni S."/>
            <person name="Pitluck S."/>
            <person name="Chain P."/>
            <person name="Malfatti S."/>
            <person name="Shin M."/>
            <person name="Vergez L."/>
            <person name="Schmutz J."/>
            <person name="Larimer F."/>
            <person name="Land M."/>
            <person name="Hauser L."/>
            <person name="Pelletier D.A."/>
            <person name="Kyrpides N."/>
            <person name="Anderson I."/>
            <person name="Oda Y."/>
            <person name="Harwood C.S."/>
            <person name="Richardson P."/>
        </authorList>
    </citation>
    <scope>NUCLEOTIDE SEQUENCE [LARGE SCALE GENOMIC DNA]</scope>
    <source>
        <strain>HaA2</strain>
    </source>
</reference>
<comment type="function">
    <text evidence="1">Component of the dark-operative protochlorophyllide reductase (DPOR) that uses Mg-ATP and reduced ferredoxin to reduce ring D of protochlorophyllide (Pchlide) to form chlorophyllide a (Chlide). This reaction is light-independent. The NB-protein (BchN-BchB) is the catalytic component of the complex.</text>
</comment>
<comment type="catalytic activity">
    <reaction evidence="1">
        <text>chlorophyllide a + oxidized 2[4Fe-4S]-[ferredoxin] + 2 ADP + 2 phosphate = protochlorophyllide a + reduced 2[4Fe-4S]-[ferredoxin] + 2 ATP + 2 H2O</text>
        <dbReference type="Rhea" id="RHEA:28202"/>
        <dbReference type="Rhea" id="RHEA-COMP:10002"/>
        <dbReference type="Rhea" id="RHEA-COMP:10004"/>
        <dbReference type="ChEBI" id="CHEBI:15377"/>
        <dbReference type="ChEBI" id="CHEBI:30616"/>
        <dbReference type="ChEBI" id="CHEBI:33722"/>
        <dbReference type="ChEBI" id="CHEBI:33723"/>
        <dbReference type="ChEBI" id="CHEBI:43474"/>
        <dbReference type="ChEBI" id="CHEBI:83348"/>
        <dbReference type="ChEBI" id="CHEBI:83350"/>
        <dbReference type="ChEBI" id="CHEBI:456216"/>
        <dbReference type="EC" id="1.3.7.7"/>
    </reaction>
</comment>
<comment type="cofactor">
    <cofactor evidence="1">
        <name>[4Fe-4S] cluster</name>
        <dbReference type="ChEBI" id="CHEBI:49883"/>
    </cofactor>
    <text evidence="1">Binds 1 [4Fe-4S] cluster per heterodimer. The cluster is bound at the heterodimer interface by residues from both subunits.</text>
</comment>
<comment type="pathway">
    <text evidence="1">Porphyrin-containing compound metabolism; bacteriochlorophyll biosynthesis (light-independent).</text>
</comment>
<comment type="subunit">
    <text evidence="1">Protochlorophyllide reductase is composed of three subunits; BchL, BchN and BchB. Forms a heterotetramer of two BchB and two BchN subunits.</text>
</comment>
<comment type="similarity">
    <text evidence="1">Belongs to the BchN/ChlN family.</text>
</comment>
<sequence>MTVHVQPCAAPAEDPVSRAVRTESGQREVFCGLTGIVWLHRKIQDAFFLVVGSRTCAHLIQSAAGVMIFAEPRFGTAIMEEKDLAGLTDANDELDRIVTQLLTRRPDIKLLFLVGSCPSEVIKLDLSRAALRLSQRFSPGVRILNYSGSGIETTFTQGEDSCLASLVPALPAAQDETSSLLVIGSLADVVEDQFMRMFDALGIGPVQFFPPRKSTALPSVGPNTKILMAQPFLPDTVRALQERGAKRLAAPFPLGVEGTTGWLRAAADAFGIDAATFDRVTEPNRVRAERALGAYKAELGGRRIFFFPDSQLEIPLARFLARELSMQLVEVGTPYLHREHLAEELKLLPAGVALTEGQDVDLQLDRCRLARPDIAVCGLGLANPLEAEGITTKWSIELVFTPIQGYEQAADLAELFARPLVRRAKLVA</sequence>
<organism>
    <name type="scientific">Rhodopseudomonas palustris (strain HaA2)</name>
    <dbReference type="NCBI Taxonomy" id="316058"/>
    <lineage>
        <taxon>Bacteria</taxon>
        <taxon>Pseudomonadati</taxon>
        <taxon>Pseudomonadota</taxon>
        <taxon>Alphaproteobacteria</taxon>
        <taxon>Hyphomicrobiales</taxon>
        <taxon>Nitrobacteraceae</taxon>
        <taxon>Rhodopseudomonas</taxon>
    </lineage>
</organism>
<feature type="chain" id="PRO_0000324023" description="Light-independent protochlorophyllide reductase subunit N">
    <location>
        <begin position="1"/>
        <end position="428"/>
    </location>
</feature>
<feature type="binding site" evidence="1">
    <location>
        <position position="31"/>
    </location>
    <ligand>
        <name>[4Fe-4S] cluster</name>
        <dbReference type="ChEBI" id="CHEBI:49883"/>
        <note>ligand shared with heterodimeric partner</note>
    </ligand>
</feature>
<feature type="binding site" evidence="1">
    <location>
        <position position="56"/>
    </location>
    <ligand>
        <name>[4Fe-4S] cluster</name>
        <dbReference type="ChEBI" id="CHEBI:49883"/>
        <note>ligand shared with heterodimeric partner</note>
    </ligand>
</feature>
<feature type="binding site" evidence="1">
    <location>
        <position position="117"/>
    </location>
    <ligand>
        <name>[4Fe-4S] cluster</name>
        <dbReference type="ChEBI" id="CHEBI:49883"/>
        <note>ligand shared with heterodimeric partner</note>
    </ligand>
</feature>
<accession>Q2ISY6</accession>
<name>BCHN_RHOP2</name>
<keyword id="KW-0004">4Fe-4S</keyword>
<keyword id="KW-0067">ATP-binding</keyword>
<keyword id="KW-0077">Bacteriochlorophyll biosynthesis</keyword>
<keyword id="KW-0149">Chlorophyll biosynthesis</keyword>
<keyword id="KW-0408">Iron</keyword>
<keyword id="KW-0411">Iron-sulfur</keyword>
<keyword id="KW-0479">Metal-binding</keyword>
<keyword id="KW-0547">Nucleotide-binding</keyword>
<keyword id="KW-0560">Oxidoreductase</keyword>
<keyword id="KW-0602">Photosynthesis</keyword>
<keyword id="KW-1185">Reference proteome</keyword>
<evidence type="ECO:0000255" key="1">
    <source>
        <dbReference type="HAMAP-Rule" id="MF_00352"/>
    </source>
</evidence>
<protein>
    <recommendedName>
        <fullName evidence="1">Light-independent protochlorophyllide reductase subunit N</fullName>
        <shortName evidence="1">DPOR subunit N</shortName>
        <shortName evidence="1">LI-POR subunit N</shortName>
        <ecNumber evidence="1">1.3.7.7</ecNumber>
    </recommendedName>
</protein>
<proteinExistence type="inferred from homology"/>
<gene>
    <name evidence="1" type="primary">bchN</name>
    <name type="ordered locus">RPB_3981</name>
</gene>